<feature type="chain" id="PRO_1000078168" description="Dihydroorotate dehydrogenase (quinone)">
    <location>
        <begin position="1"/>
        <end position="339"/>
    </location>
</feature>
<feature type="active site" description="Nucleophile" evidence="1">
    <location>
        <position position="175"/>
    </location>
</feature>
<feature type="binding site" evidence="1">
    <location>
        <begin position="62"/>
        <end position="66"/>
    </location>
    <ligand>
        <name>FMN</name>
        <dbReference type="ChEBI" id="CHEBI:58210"/>
    </ligand>
</feature>
<feature type="binding site" evidence="1">
    <location>
        <position position="66"/>
    </location>
    <ligand>
        <name>substrate</name>
    </ligand>
</feature>
<feature type="binding site" evidence="1">
    <location>
        <position position="86"/>
    </location>
    <ligand>
        <name>FMN</name>
        <dbReference type="ChEBI" id="CHEBI:58210"/>
    </ligand>
</feature>
<feature type="binding site" evidence="1">
    <location>
        <begin position="111"/>
        <end position="115"/>
    </location>
    <ligand>
        <name>substrate</name>
    </ligand>
</feature>
<feature type="binding site" evidence="1">
    <location>
        <position position="139"/>
    </location>
    <ligand>
        <name>FMN</name>
        <dbReference type="ChEBI" id="CHEBI:58210"/>
    </ligand>
</feature>
<feature type="binding site" evidence="1">
    <location>
        <position position="172"/>
    </location>
    <ligand>
        <name>FMN</name>
        <dbReference type="ChEBI" id="CHEBI:58210"/>
    </ligand>
</feature>
<feature type="binding site" evidence="1">
    <location>
        <position position="172"/>
    </location>
    <ligand>
        <name>substrate</name>
    </ligand>
</feature>
<feature type="binding site" evidence="1">
    <location>
        <position position="177"/>
    </location>
    <ligand>
        <name>substrate</name>
    </ligand>
</feature>
<feature type="binding site" evidence="1">
    <location>
        <position position="217"/>
    </location>
    <ligand>
        <name>FMN</name>
        <dbReference type="ChEBI" id="CHEBI:58210"/>
    </ligand>
</feature>
<feature type="binding site" evidence="1">
    <location>
        <position position="245"/>
    </location>
    <ligand>
        <name>FMN</name>
        <dbReference type="ChEBI" id="CHEBI:58210"/>
    </ligand>
</feature>
<feature type="binding site" evidence="1">
    <location>
        <begin position="246"/>
        <end position="247"/>
    </location>
    <ligand>
        <name>substrate</name>
    </ligand>
</feature>
<feature type="binding site" evidence="1">
    <location>
        <position position="268"/>
    </location>
    <ligand>
        <name>FMN</name>
        <dbReference type="ChEBI" id="CHEBI:58210"/>
    </ligand>
</feature>
<feature type="binding site" evidence="1">
    <location>
        <position position="297"/>
    </location>
    <ligand>
        <name>FMN</name>
        <dbReference type="ChEBI" id="CHEBI:58210"/>
    </ligand>
</feature>
<feature type="binding site" evidence="1">
    <location>
        <begin position="318"/>
        <end position="319"/>
    </location>
    <ligand>
        <name>FMN</name>
        <dbReference type="ChEBI" id="CHEBI:58210"/>
    </ligand>
</feature>
<gene>
    <name evidence="1" type="primary">pyrD</name>
    <name type="ordered locus">Spea_1943</name>
</gene>
<keyword id="KW-1003">Cell membrane</keyword>
<keyword id="KW-0285">Flavoprotein</keyword>
<keyword id="KW-0288">FMN</keyword>
<keyword id="KW-0472">Membrane</keyword>
<keyword id="KW-0560">Oxidoreductase</keyword>
<keyword id="KW-0665">Pyrimidine biosynthesis</keyword>
<keyword id="KW-1185">Reference proteome</keyword>
<evidence type="ECO:0000255" key="1">
    <source>
        <dbReference type="HAMAP-Rule" id="MF_00225"/>
    </source>
</evidence>
<name>PYRD_SHEPA</name>
<organism>
    <name type="scientific">Shewanella pealeana (strain ATCC 700345 / ANG-SQ1)</name>
    <dbReference type="NCBI Taxonomy" id="398579"/>
    <lineage>
        <taxon>Bacteria</taxon>
        <taxon>Pseudomonadati</taxon>
        <taxon>Pseudomonadota</taxon>
        <taxon>Gammaproteobacteria</taxon>
        <taxon>Alteromonadales</taxon>
        <taxon>Shewanellaceae</taxon>
        <taxon>Shewanella</taxon>
    </lineage>
</organism>
<accession>A8H3X8</accession>
<protein>
    <recommendedName>
        <fullName evidence="1">Dihydroorotate dehydrogenase (quinone)</fullName>
        <ecNumber evidence="1">1.3.5.2</ecNumber>
    </recommendedName>
    <alternativeName>
        <fullName evidence="1">DHOdehase</fullName>
        <shortName evidence="1">DHOD</shortName>
        <shortName evidence="1">DHODase</shortName>
    </alternativeName>
    <alternativeName>
        <fullName evidence="1">Dihydroorotate oxidase</fullName>
    </alternativeName>
</protein>
<sequence>MFYKIAQKFMFQMDPELAHNFAIGSLKFTGNSPLNCFYAQNIKPAPVTMMGLTFPNPVGLAAGMDKEGECIDAFHAMGFGHIEVGTVTPRPQPGNEQPRCFRLKPAKAIINRMGFNNKGVDNLVANLKAVKSNAMVGVNIGKNKDTPVEQGKEDYLICMDKVYPYAAYIAVNISSPNTPGLRSLQYGDLLDDLLGSLKQKQKELAEQHGKYVPIALKIAPDLSSEEIEKIADALIRSEFDAAIATNTTLTRDGVSGLLNANEAGGLSGKPLNSLSTMVIKQLADCLKGQLPIIGVGGINSAEDALDKLDAGAEMVQIYSGFIYQGPKLIKDIVEAYRIK</sequence>
<reference key="1">
    <citation type="submission" date="2007-10" db="EMBL/GenBank/DDBJ databases">
        <title>Complete sequence of Shewanella pealeana ATCC 700345.</title>
        <authorList>
            <consortium name="US DOE Joint Genome Institute"/>
            <person name="Copeland A."/>
            <person name="Lucas S."/>
            <person name="Lapidus A."/>
            <person name="Barry K."/>
            <person name="Glavina del Rio T."/>
            <person name="Dalin E."/>
            <person name="Tice H."/>
            <person name="Pitluck S."/>
            <person name="Chertkov O."/>
            <person name="Brettin T."/>
            <person name="Bruce D."/>
            <person name="Detter J.C."/>
            <person name="Han C."/>
            <person name="Schmutz J."/>
            <person name="Larimer F."/>
            <person name="Land M."/>
            <person name="Hauser L."/>
            <person name="Kyrpides N."/>
            <person name="Kim E."/>
            <person name="Zhao J.-S.Z."/>
            <person name="Manno D."/>
            <person name="Hawari J."/>
            <person name="Richardson P."/>
        </authorList>
    </citation>
    <scope>NUCLEOTIDE SEQUENCE [LARGE SCALE GENOMIC DNA]</scope>
    <source>
        <strain>ATCC 700345 / ANG-SQ1</strain>
    </source>
</reference>
<dbReference type="EC" id="1.3.5.2" evidence="1"/>
<dbReference type="EMBL" id="CP000851">
    <property type="protein sequence ID" value="ABV87265.1"/>
    <property type="molecule type" value="Genomic_DNA"/>
</dbReference>
<dbReference type="RefSeq" id="WP_012155183.1">
    <property type="nucleotide sequence ID" value="NC_009901.1"/>
</dbReference>
<dbReference type="SMR" id="A8H3X8"/>
<dbReference type="STRING" id="398579.Spea_1943"/>
<dbReference type="KEGG" id="spl:Spea_1943"/>
<dbReference type="eggNOG" id="COG0167">
    <property type="taxonomic scope" value="Bacteria"/>
</dbReference>
<dbReference type="HOGENOM" id="CLU_013640_2_0_6"/>
<dbReference type="OrthoDB" id="9802377at2"/>
<dbReference type="UniPathway" id="UPA00070">
    <property type="reaction ID" value="UER00946"/>
</dbReference>
<dbReference type="Proteomes" id="UP000002608">
    <property type="component" value="Chromosome"/>
</dbReference>
<dbReference type="GO" id="GO:0005737">
    <property type="term" value="C:cytoplasm"/>
    <property type="evidence" value="ECO:0007669"/>
    <property type="project" value="InterPro"/>
</dbReference>
<dbReference type="GO" id="GO:0005886">
    <property type="term" value="C:plasma membrane"/>
    <property type="evidence" value="ECO:0007669"/>
    <property type="project" value="UniProtKB-SubCell"/>
</dbReference>
<dbReference type="GO" id="GO:0106430">
    <property type="term" value="F:dihydroorotate dehydrogenase (quinone) activity"/>
    <property type="evidence" value="ECO:0007669"/>
    <property type="project" value="UniProtKB-EC"/>
</dbReference>
<dbReference type="GO" id="GO:0006207">
    <property type="term" value="P:'de novo' pyrimidine nucleobase biosynthetic process"/>
    <property type="evidence" value="ECO:0007669"/>
    <property type="project" value="InterPro"/>
</dbReference>
<dbReference type="GO" id="GO:0044205">
    <property type="term" value="P:'de novo' UMP biosynthetic process"/>
    <property type="evidence" value="ECO:0007669"/>
    <property type="project" value="UniProtKB-UniRule"/>
</dbReference>
<dbReference type="CDD" id="cd04738">
    <property type="entry name" value="DHOD_2_like"/>
    <property type="match status" value="1"/>
</dbReference>
<dbReference type="FunFam" id="3.20.20.70:FF:000028">
    <property type="entry name" value="Dihydroorotate dehydrogenase (quinone)"/>
    <property type="match status" value="1"/>
</dbReference>
<dbReference type="Gene3D" id="3.20.20.70">
    <property type="entry name" value="Aldolase class I"/>
    <property type="match status" value="1"/>
</dbReference>
<dbReference type="HAMAP" id="MF_00225">
    <property type="entry name" value="DHO_dh_type2"/>
    <property type="match status" value="1"/>
</dbReference>
<dbReference type="InterPro" id="IPR013785">
    <property type="entry name" value="Aldolase_TIM"/>
</dbReference>
<dbReference type="InterPro" id="IPR050074">
    <property type="entry name" value="DHO_dehydrogenase"/>
</dbReference>
<dbReference type="InterPro" id="IPR012135">
    <property type="entry name" value="Dihydroorotate_DH_1_2"/>
</dbReference>
<dbReference type="InterPro" id="IPR005719">
    <property type="entry name" value="Dihydroorotate_DH_2"/>
</dbReference>
<dbReference type="InterPro" id="IPR005720">
    <property type="entry name" value="Dihydroorotate_DH_cat"/>
</dbReference>
<dbReference type="InterPro" id="IPR001295">
    <property type="entry name" value="Dihydroorotate_DH_CS"/>
</dbReference>
<dbReference type="NCBIfam" id="NF003644">
    <property type="entry name" value="PRK05286.1-1"/>
    <property type="match status" value="1"/>
</dbReference>
<dbReference type="NCBIfam" id="NF003645">
    <property type="entry name" value="PRK05286.1-2"/>
    <property type="match status" value="1"/>
</dbReference>
<dbReference type="NCBIfam" id="NF003646">
    <property type="entry name" value="PRK05286.1-4"/>
    <property type="match status" value="1"/>
</dbReference>
<dbReference type="NCBIfam" id="NF003652">
    <property type="entry name" value="PRK05286.2-5"/>
    <property type="match status" value="1"/>
</dbReference>
<dbReference type="NCBIfam" id="TIGR01036">
    <property type="entry name" value="pyrD_sub2"/>
    <property type="match status" value="1"/>
</dbReference>
<dbReference type="PANTHER" id="PTHR48109:SF4">
    <property type="entry name" value="DIHYDROOROTATE DEHYDROGENASE (QUINONE), MITOCHONDRIAL"/>
    <property type="match status" value="1"/>
</dbReference>
<dbReference type="PANTHER" id="PTHR48109">
    <property type="entry name" value="DIHYDROOROTATE DEHYDROGENASE (QUINONE), MITOCHONDRIAL-RELATED"/>
    <property type="match status" value="1"/>
</dbReference>
<dbReference type="Pfam" id="PF01180">
    <property type="entry name" value="DHO_dh"/>
    <property type="match status" value="1"/>
</dbReference>
<dbReference type="PIRSF" id="PIRSF000164">
    <property type="entry name" value="DHO_oxidase"/>
    <property type="match status" value="1"/>
</dbReference>
<dbReference type="SUPFAM" id="SSF51395">
    <property type="entry name" value="FMN-linked oxidoreductases"/>
    <property type="match status" value="1"/>
</dbReference>
<dbReference type="PROSITE" id="PS00911">
    <property type="entry name" value="DHODEHASE_1"/>
    <property type="match status" value="1"/>
</dbReference>
<dbReference type="PROSITE" id="PS00912">
    <property type="entry name" value="DHODEHASE_2"/>
    <property type="match status" value="1"/>
</dbReference>
<proteinExistence type="inferred from homology"/>
<comment type="function">
    <text evidence="1">Catalyzes the conversion of dihydroorotate to orotate with quinone as electron acceptor.</text>
</comment>
<comment type="catalytic activity">
    <reaction evidence="1">
        <text>(S)-dihydroorotate + a quinone = orotate + a quinol</text>
        <dbReference type="Rhea" id="RHEA:30187"/>
        <dbReference type="ChEBI" id="CHEBI:24646"/>
        <dbReference type="ChEBI" id="CHEBI:30839"/>
        <dbReference type="ChEBI" id="CHEBI:30864"/>
        <dbReference type="ChEBI" id="CHEBI:132124"/>
        <dbReference type="EC" id="1.3.5.2"/>
    </reaction>
</comment>
<comment type="cofactor">
    <cofactor evidence="1">
        <name>FMN</name>
        <dbReference type="ChEBI" id="CHEBI:58210"/>
    </cofactor>
    <text evidence="1">Binds 1 FMN per subunit.</text>
</comment>
<comment type="pathway">
    <text evidence="1">Pyrimidine metabolism; UMP biosynthesis via de novo pathway; orotate from (S)-dihydroorotate (quinone route): step 1/1.</text>
</comment>
<comment type="subunit">
    <text evidence="1">Monomer.</text>
</comment>
<comment type="subcellular location">
    <subcellularLocation>
        <location evidence="1">Cell membrane</location>
        <topology evidence="1">Peripheral membrane protein</topology>
    </subcellularLocation>
</comment>
<comment type="similarity">
    <text evidence="1">Belongs to the dihydroorotate dehydrogenase family. Type 2 subfamily.</text>
</comment>